<keyword id="KW-0028">Amino-acid biosynthesis</keyword>
<keyword id="KW-0057">Aromatic amino acid biosynthesis</keyword>
<keyword id="KW-0328">Glycosyltransferase</keyword>
<keyword id="KW-0460">Magnesium</keyword>
<keyword id="KW-0479">Metal-binding</keyword>
<keyword id="KW-1185">Reference proteome</keyword>
<keyword id="KW-0808">Transferase</keyword>
<keyword id="KW-0822">Tryptophan biosynthesis</keyword>
<name>TRPD_TOLAT</name>
<gene>
    <name evidence="1" type="primary">trpD</name>
    <name type="ordered locus">Tola_0942</name>
</gene>
<proteinExistence type="inferred from homology"/>
<organism>
    <name type="scientific">Tolumonas auensis (strain DSM 9187 / NBRC 110442 / TA 4)</name>
    <dbReference type="NCBI Taxonomy" id="595494"/>
    <lineage>
        <taxon>Bacteria</taxon>
        <taxon>Pseudomonadati</taxon>
        <taxon>Pseudomonadota</taxon>
        <taxon>Gammaproteobacteria</taxon>
        <taxon>Aeromonadales</taxon>
        <taxon>Aeromonadaceae</taxon>
        <taxon>Tolumonas</taxon>
    </lineage>
</organism>
<comment type="function">
    <text evidence="1">Catalyzes the transfer of the phosphoribosyl group of 5-phosphorylribose-1-pyrophosphate (PRPP) to anthranilate to yield N-(5'-phosphoribosyl)-anthranilate (PRA).</text>
</comment>
<comment type="catalytic activity">
    <reaction evidence="1">
        <text>N-(5-phospho-beta-D-ribosyl)anthranilate + diphosphate = 5-phospho-alpha-D-ribose 1-diphosphate + anthranilate</text>
        <dbReference type="Rhea" id="RHEA:11768"/>
        <dbReference type="ChEBI" id="CHEBI:16567"/>
        <dbReference type="ChEBI" id="CHEBI:18277"/>
        <dbReference type="ChEBI" id="CHEBI:33019"/>
        <dbReference type="ChEBI" id="CHEBI:58017"/>
        <dbReference type="EC" id="2.4.2.18"/>
    </reaction>
</comment>
<comment type="cofactor">
    <cofactor evidence="1">
        <name>Mg(2+)</name>
        <dbReference type="ChEBI" id="CHEBI:18420"/>
    </cofactor>
    <text evidence="1">Binds 2 magnesium ions per monomer.</text>
</comment>
<comment type="pathway">
    <text evidence="1">Amino-acid biosynthesis; L-tryptophan biosynthesis; L-tryptophan from chorismate: step 2/5.</text>
</comment>
<comment type="subunit">
    <text evidence="1">Homodimer.</text>
</comment>
<comment type="similarity">
    <text evidence="1">Belongs to the anthranilate phosphoribosyltransferase family.</text>
</comment>
<evidence type="ECO:0000255" key="1">
    <source>
        <dbReference type="HAMAP-Rule" id="MF_00211"/>
    </source>
</evidence>
<dbReference type="EC" id="2.4.2.18" evidence="1"/>
<dbReference type="EMBL" id="CP001616">
    <property type="protein sequence ID" value="ACQ92570.1"/>
    <property type="molecule type" value="Genomic_DNA"/>
</dbReference>
<dbReference type="RefSeq" id="WP_012729169.1">
    <property type="nucleotide sequence ID" value="NC_012691.1"/>
</dbReference>
<dbReference type="SMR" id="C4LC91"/>
<dbReference type="STRING" id="595494.Tola_0942"/>
<dbReference type="KEGG" id="tau:Tola_0942"/>
<dbReference type="eggNOG" id="COG0547">
    <property type="taxonomic scope" value="Bacteria"/>
</dbReference>
<dbReference type="HOGENOM" id="CLU_034315_2_1_6"/>
<dbReference type="OrthoDB" id="9806430at2"/>
<dbReference type="UniPathway" id="UPA00035">
    <property type="reaction ID" value="UER00041"/>
</dbReference>
<dbReference type="Proteomes" id="UP000009073">
    <property type="component" value="Chromosome"/>
</dbReference>
<dbReference type="GO" id="GO:0005829">
    <property type="term" value="C:cytosol"/>
    <property type="evidence" value="ECO:0007669"/>
    <property type="project" value="TreeGrafter"/>
</dbReference>
<dbReference type="GO" id="GO:0004048">
    <property type="term" value="F:anthranilate phosphoribosyltransferase activity"/>
    <property type="evidence" value="ECO:0007669"/>
    <property type="project" value="UniProtKB-UniRule"/>
</dbReference>
<dbReference type="GO" id="GO:0000287">
    <property type="term" value="F:magnesium ion binding"/>
    <property type="evidence" value="ECO:0007669"/>
    <property type="project" value="UniProtKB-UniRule"/>
</dbReference>
<dbReference type="GO" id="GO:0000162">
    <property type="term" value="P:L-tryptophan biosynthetic process"/>
    <property type="evidence" value="ECO:0007669"/>
    <property type="project" value="UniProtKB-UniRule"/>
</dbReference>
<dbReference type="FunFam" id="3.40.1030.10:FF:000002">
    <property type="entry name" value="Anthranilate phosphoribosyltransferase"/>
    <property type="match status" value="1"/>
</dbReference>
<dbReference type="Gene3D" id="3.40.1030.10">
    <property type="entry name" value="Nucleoside phosphorylase/phosphoribosyltransferase catalytic domain"/>
    <property type="match status" value="1"/>
</dbReference>
<dbReference type="Gene3D" id="1.20.970.10">
    <property type="entry name" value="Transferase, Pyrimidine Nucleoside Phosphorylase, Chain C"/>
    <property type="match status" value="1"/>
</dbReference>
<dbReference type="HAMAP" id="MF_00211">
    <property type="entry name" value="TrpD"/>
    <property type="match status" value="1"/>
</dbReference>
<dbReference type="InterPro" id="IPR005940">
    <property type="entry name" value="Anthranilate_Pribosyl_Tfrase"/>
</dbReference>
<dbReference type="InterPro" id="IPR000312">
    <property type="entry name" value="Glycosyl_Trfase_fam3"/>
</dbReference>
<dbReference type="InterPro" id="IPR017459">
    <property type="entry name" value="Glycosyl_Trfase_fam3_N_dom"/>
</dbReference>
<dbReference type="InterPro" id="IPR036320">
    <property type="entry name" value="Glycosyl_Trfase_fam3_N_dom_sf"/>
</dbReference>
<dbReference type="InterPro" id="IPR035902">
    <property type="entry name" value="Nuc_phospho_transferase"/>
</dbReference>
<dbReference type="NCBIfam" id="TIGR01245">
    <property type="entry name" value="trpD"/>
    <property type="match status" value="1"/>
</dbReference>
<dbReference type="PANTHER" id="PTHR43285">
    <property type="entry name" value="ANTHRANILATE PHOSPHORIBOSYLTRANSFERASE"/>
    <property type="match status" value="1"/>
</dbReference>
<dbReference type="PANTHER" id="PTHR43285:SF2">
    <property type="entry name" value="ANTHRANILATE PHOSPHORIBOSYLTRANSFERASE"/>
    <property type="match status" value="1"/>
</dbReference>
<dbReference type="Pfam" id="PF02885">
    <property type="entry name" value="Glycos_trans_3N"/>
    <property type="match status" value="1"/>
</dbReference>
<dbReference type="Pfam" id="PF00591">
    <property type="entry name" value="Glycos_transf_3"/>
    <property type="match status" value="1"/>
</dbReference>
<dbReference type="SUPFAM" id="SSF52418">
    <property type="entry name" value="Nucleoside phosphorylase/phosphoribosyltransferase catalytic domain"/>
    <property type="match status" value="1"/>
</dbReference>
<dbReference type="SUPFAM" id="SSF47648">
    <property type="entry name" value="Nucleoside phosphorylase/phosphoribosyltransferase N-terminal domain"/>
    <property type="match status" value="1"/>
</dbReference>
<sequence length="336" mass="35992">MTVSLEGLYRGESLTSEQTEQLFGELLRGEMDPIVLSSLLTAMKVKGESPSEIEGAARALIAAAKPFPRPDYEFCDIVGTGGDGLYTINISSTAAIVGATCGIKVAKHGNRSVSSKTGSSDLLEKLGIKLDMSPETARHCLDEANICFLFAPHYHSGMRFAAPVRQALKTRTIFNVLGPLINPARPTYQLMGVYSPDLLEPIAETLHALGLKKGMVAYGSGLDEIAVHGETQVAEINDGHIRYYTLTPTDFGLKYYPLESIQGGTPDENRKITETLLAGKGTDAQQAAIAINLAPLLKMGGLVDTLKQGAEMAIETLRSGDALDKVTQLATLSHKE</sequence>
<protein>
    <recommendedName>
        <fullName evidence="1">Anthranilate phosphoribosyltransferase</fullName>
        <ecNumber evidence="1">2.4.2.18</ecNumber>
    </recommendedName>
</protein>
<reference key="1">
    <citation type="submission" date="2009-05" db="EMBL/GenBank/DDBJ databases">
        <title>Complete sequence of Tolumonas auensis DSM 9187.</title>
        <authorList>
            <consortium name="US DOE Joint Genome Institute"/>
            <person name="Lucas S."/>
            <person name="Copeland A."/>
            <person name="Lapidus A."/>
            <person name="Glavina del Rio T."/>
            <person name="Tice H."/>
            <person name="Bruce D."/>
            <person name="Goodwin L."/>
            <person name="Pitluck S."/>
            <person name="Chertkov O."/>
            <person name="Brettin T."/>
            <person name="Detter J.C."/>
            <person name="Han C."/>
            <person name="Larimer F."/>
            <person name="Land M."/>
            <person name="Hauser L."/>
            <person name="Kyrpides N."/>
            <person name="Mikhailova N."/>
            <person name="Spring S."/>
            <person name="Beller H."/>
        </authorList>
    </citation>
    <scope>NUCLEOTIDE SEQUENCE [LARGE SCALE GENOMIC DNA]</scope>
    <source>
        <strain>DSM 9187 / NBRC 110442 / TA 4</strain>
    </source>
</reference>
<accession>C4LC91</accession>
<feature type="chain" id="PRO_1000204196" description="Anthranilate phosphoribosyltransferase">
    <location>
        <begin position="1"/>
        <end position="336"/>
    </location>
</feature>
<feature type="binding site" evidence="1">
    <location>
        <position position="79"/>
    </location>
    <ligand>
        <name>5-phospho-alpha-D-ribose 1-diphosphate</name>
        <dbReference type="ChEBI" id="CHEBI:58017"/>
    </ligand>
</feature>
<feature type="binding site" evidence="1">
    <location>
        <position position="79"/>
    </location>
    <ligand>
        <name>anthranilate</name>
        <dbReference type="ChEBI" id="CHEBI:16567"/>
        <label>1</label>
    </ligand>
</feature>
<feature type="binding site" evidence="1">
    <location>
        <begin position="82"/>
        <end position="83"/>
    </location>
    <ligand>
        <name>5-phospho-alpha-D-ribose 1-diphosphate</name>
        <dbReference type="ChEBI" id="CHEBI:58017"/>
    </ligand>
</feature>
<feature type="binding site" evidence="1">
    <location>
        <position position="87"/>
    </location>
    <ligand>
        <name>5-phospho-alpha-D-ribose 1-diphosphate</name>
        <dbReference type="ChEBI" id="CHEBI:58017"/>
    </ligand>
</feature>
<feature type="binding site" evidence="1">
    <location>
        <begin position="89"/>
        <end position="92"/>
    </location>
    <ligand>
        <name>5-phospho-alpha-D-ribose 1-diphosphate</name>
        <dbReference type="ChEBI" id="CHEBI:58017"/>
    </ligand>
</feature>
<feature type="binding site" evidence="1">
    <location>
        <position position="91"/>
    </location>
    <ligand>
        <name>Mg(2+)</name>
        <dbReference type="ChEBI" id="CHEBI:18420"/>
        <label>1</label>
    </ligand>
</feature>
<feature type="binding site" evidence="1">
    <location>
        <begin position="107"/>
        <end position="115"/>
    </location>
    <ligand>
        <name>5-phospho-alpha-D-ribose 1-diphosphate</name>
        <dbReference type="ChEBI" id="CHEBI:58017"/>
    </ligand>
</feature>
<feature type="binding site" evidence="1">
    <location>
        <position position="110"/>
    </location>
    <ligand>
        <name>anthranilate</name>
        <dbReference type="ChEBI" id="CHEBI:16567"/>
        <label>1</label>
    </ligand>
</feature>
<feature type="binding site" evidence="1">
    <location>
        <position position="119"/>
    </location>
    <ligand>
        <name>5-phospho-alpha-D-ribose 1-diphosphate</name>
        <dbReference type="ChEBI" id="CHEBI:58017"/>
    </ligand>
</feature>
<feature type="binding site" evidence="1">
    <location>
        <position position="165"/>
    </location>
    <ligand>
        <name>anthranilate</name>
        <dbReference type="ChEBI" id="CHEBI:16567"/>
        <label>2</label>
    </ligand>
</feature>
<feature type="binding site" evidence="1">
    <location>
        <position position="223"/>
    </location>
    <ligand>
        <name>Mg(2+)</name>
        <dbReference type="ChEBI" id="CHEBI:18420"/>
        <label>2</label>
    </ligand>
</feature>
<feature type="binding site" evidence="1">
    <location>
        <position position="224"/>
    </location>
    <ligand>
        <name>Mg(2+)</name>
        <dbReference type="ChEBI" id="CHEBI:18420"/>
        <label>1</label>
    </ligand>
</feature>
<feature type="binding site" evidence="1">
    <location>
        <position position="224"/>
    </location>
    <ligand>
        <name>Mg(2+)</name>
        <dbReference type="ChEBI" id="CHEBI:18420"/>
        <label>2</label>
    </ligand>
</feature>